<evidence type="ECO:0000256" key="1">
    <source>
        <dbReference type="SAM" id="MobiDB-lite"/>
    </source>
</evidence>
<evidence type="ECO:0000305" key="2"/>
<keyword id="KW-1185">Reference proteome</keyword>
<organism>
    <name type="scientific">Mycoplasma genitalium (strain ATCC 33530 / DSM 19775 / NCTC 10195 / G37)</name>
    <name type="common">Mycoplasmoides genitalium</name>
    <dbReference type="NCBI Taxonomy" id="243273"/>
    <lineage>
        <taxon>Bacteria</taxon>
        <taxon>Bacillati</taxon>
        <taxon>Mycoplasmatota</taxon>
        <taxon>Mycoplasmoidales</taxon>
        <taxon>Mycoplasmoidaceae</taxon>
        <taxon>Mycoplasmoides</taxon>
    </lineage>
</organism>
<name>Y364_MYCGE</name>
<gene>
    <name type="ordered locus">MG364</name>
</gene>
<protein>
    <recommendedName>
        <fullName>Uncharacterized protein MG364</fullName>
    </recommendedName>
</protein>
<sequence>MDGGQQGSFFGLLVIVIPIILLIVFFSKKKGAQKNDFSGEGGNRSSRKDEVWKTIKQFLQEKNERGKEIIKTFVAKKPNPLHSKKDRKLFNQEIQAYITSNNLGKSEAKRYKNEQTRLMQRELYCIYFVTKDAKSTEVDDARIIEAEVYQKPTKTKSTPERLIRILGLKNFETEMQWIQPLMVREEKRKEKEEQKKLKLAARELKKKKKKKIKKPKEIRNQKNV</sequence>
<feature type="chain" id="PRO_0000210565" description="Uncharacterized protein MG364">
    <location>
        <begin position="1"/>
        <end position="224"/>
    </location>
</feature>
<feature type="region of interest" description="Disordered" evidence="1">
    <location>
        <begin position="203"/>
        <end position="224"/>
    </location>
</feature>
<feature type="compositionally biased region" description="Basic residues" evidence="1">
    <location>
        <begin position="204"/>
        <end position="214"/>
    </location>
</feature>
<feature type="compositionally biased region" description="Basic and acidic residues" evidence="1">
    <location>
        <begin position="215"/>
        <end position="224"/>
    </location>
</feature>
<feature type="sequence conflict" description="In Ref. 2." evidence="2" ref="2">
    <original>IQAYIT</original>
    <variation>RYRHIF</variation>
    <location>
        <begin position="94"/>
        <end position="99"/>
    </location>
</feature>
<proteinExistence type="predicted"/>
<dbReference type="EMBL" id="L43967">
    <property type="protein sequence ID" value="AAC71591.1"/>
    <property type="molecule type" value="Genomic_DNA"/>
</dbReference>
<dbReference type="EMBL" id="X61520">
    <property type="protein sequence ID" value="CAA43732.1"/>
    <property type="molecule type" value="Genomic_DNA"/>
</dbReference>
<dbReference type="PIR" id="C64240">
    <property type="entry name" value="C64240"/>
</dbReference>
<dbReference type="RefSeq" id="WP_010869449.1">
    <property type="nucleotide sequence ID" value="NC_000908.2"/>
</dbReference>
<dbReference type="SMR" id="P47604"/>
<dbReference type="STRING" id="243273.MG_364"/>
<dbReference type="GeneID" id="88282547"/>
<dbReference type="KEGG" id="mge:MG_364"/>
<dbReference type="eggNOG" id="ENOG50345FH">
    <property type="taxonomic scope" value="Bacteria"/>
</dbReference>
<dbReference type="HOGENOM" id="CLU_095608_0_0_14"/>
<dbReference type="InParanoid" id="P47604"/>
<dbReference type="OrthoDB" id="399282at2"/>
<dbReference type="BioCyc" id="MGEN243273:G1GJ2-458-MONOMER"/>
<dbReference type="Proteomes" id="UP000000807">
    <property type="component" value="Chromosome"/>
</dbReference>
<dbReference type="InterPro" id="IPR035325">
    <property type="entry name" value="DUF5385"/>
</dbReference>
<dbReference type="Pfam" id="PF17359">
    <property type="entry name" value="DUF5385"/>
    <property type="match status" value="1"/>
</dbReference>
<reference key="1">
    <citation type="journal article" date="1995" name="Science">
        <title>The minimal gene complement of Mycoplasma genitalium.</title>
        <authorList>
            <person name="Fraser C.M."/>
            <person name="Gocayne J.D."/>
            <person name="White O."/>
            <person name="Adams M.D."/>
            <person name="Clayton R.A."/>
            <person name="Fleischmann R.D."/>
            <person name="Bult C.J."/>
            <person name="Kerlavage A.R."/>
            <person name="Sutton G.G."/>
            <person name="Kelley J.M."/>
            <person name="Fritchman J.L."/>
            <person name="Weidman J.F."/>
            <person name="Small K.V."/>
            <person name="Sandusky M."/>
            <person name="Fuhrmann J.L."/>
            <person name="Nguyen D.T."/>
            <person name="Utterback T.R."/>
            <person name="Saudek D.M."/>
            <person name="Phillips C.A."/>
            <person name="Merrick J.M."/>
            <person name="Tomb J.-F."/>
            <person name="Dougherty B.A."/>
            <person name="Bott K.F."/>
            <person name="Hu P.-C."/>
            <person name="Lucier T.S."/>
            <person name="Peterson S.N."/>
            <person name="Smith H.O."/>
            <person name="Hutchison C.A. III"/>
            <person name="Venter J.C."/>
        </authorList>
    </citation>
    <scope>NUCLEOTIDE SEQUENCE [LARGE SCALE GENOMIC DNA]</scope>
    <source>
        <strain>ATCC 33530 / DSM 19775 / NCTC 10195 / G37</strain>
    </source>
</reference>
<reference key="2">
    <citation type="journal article" date="1991" name="Nucleic Acids Res.">
        <title>A random sequencing approach for placing markers on the physical map of Mycoplasma genitalium.</title>
        <authorList>
            <person name="Peterson S.N."/>
            <person name="Schramm N."/>
            <person name="Hu P.-C."/>
            <person name="Bott K.F."/>
            <person name="Hutchison C.A. III"/>
        </authorList>
    </citation>
    <scope>NUCLEOTIDE SEQUENCE [GENOMIC DNA] OF 94-178</scope>
    <source>
        <strain>ATCC 33530 / DSM 19775 / NCTC 10195 / G37</strain>
    </source>
</reference>
<accession>P47604</accession>
<accession>Q49476</accession>